<keyword id="KW-1003">Cell membrane</keyword>
<keyword id="KW-0297">G-protein coupled receptor</keyword>
<keyword id="KW-0325">Glycoprotein</keyword>
<keyword id="KW-0472">Membrane</keyword>
<keyword id="KW-0675">Receptor</keyword>
<keyword id="KW-1185">Reference proteome</keyword>
<keyword id="KW-0807">Transducer</keyword>
<keyword id="KW-0812">Transmembrane</keyword>
<keyword id="KW-1133">Transmembrane helix</keyword>
<dbReference type="EMBL" id="AF140708">
    <property type="protein sequence ID" value="AAF26668.1"/>
    <property type="molecule type" value="Genomic_DNA"/>
</dbReference>
<dbReference type="EMBL" id="AC166360">
    <property type="status" value="NOT_ANNOTATED_CDS"/>
    <property type="molecule type" value="Genomic_DNA"/>
</dbReference>
<dbReference type="CCDS" id="CCDS37438.1"/>
<dbReference type="RefSeq" id="NP_001013854.2">
    <property type="nucleotide sequence ID" value="NM_001013832.2"/>
</dbReference>
<dbReference type="SMR" id="F8VQN3"/>
<dbReference type="BioGRID" id="242929">
    <property type="interactions" value="3"/>
</dbReference>
<dbReference type="FunCoup" id="F8VQN3">
    <property type="interactions" value="541"/>
</dbReference>
<dbReference type="STRING" id="10090.ENSMUSP00000089237"/>
<dbReference type="GuidetoPHARMACOLOGY" id="98"/>
<dbReference type="GlyCosmos" id="F8VQN3">
    <property type="glycosylation" value="1 site, No reported glycans"/>
</dbReference>
<dbReference type="GlyGen" id="F8VQN3">
    <property type="glycosylation" value="1 site"/>
</dbReference>
<dbReference type="PaxDb" id="10090-ENSMUSP00000089237"/>
<dbReference type="Antibodypedia" id="2933">
    <property type="antibodies" value="115 antibodies from 26 providers"/>
</dbReference>
<dbReference type="DNASU" id="436440"/>
<dbReference type="Ensembl" id="ENSMUST00000091648.4">
    <property type="protein sequence ID" value="ENSMUSP00000089237.3"/>
    <property type="gene ID" value="ENSMUSG00000071311.3"/>
</dbReference>
<dbReference type="GeneID" id="436440"/>
<dbReference type="KEGG" id="mmu:436440"/>
<dbReference type="UCSC" id="uc008alx.1">
    <property type="organism name" value="mouse"/>
</dbReference>
<dbReference type="AGR" id="MGI:1354372"/>
<dbReference type="CTD" id="436440"/>
<dbReference type="MGI" id="MGI:1354372">
    <property type="gene designation" value="Gpr31b"/>
</dbReference>
<dbReference type="VEuPathDB" id="HostDB:ENSMUSG00000071311"/>
<dbReference type="eggNOG" id="KOG3656">
    <property type="taxonomic scope" value="Eukaryota"/>
</dbReference>
<dbReference type="GeneTree" id="ENSGT00990000203619"/>
<dbReference type="HOGENOM" id="CLU_009579_8_2_1"/>
<dbReference type="InParanoid" id="F8VQN3"/>
<dbReference type="OMA" id="CLPIKAH"/>
<dbReference type="OrthoDB" id="8895966at2759"/>
<dbReference type="PhylomeDB" id="F8VQN3"/>
<dbReference type="TreeFam" id="TF337237"/>
<dbReference type="Reactome" id="R-MMU-418594">
    <property type="pathway name" value="G alpha (i) signalling events"/>
</dbReference>
<dbReference type="Reactome" id="R-MMU-444209">
    <property type="pathway name" value="Free fatty acid receptors"/>
</dbReference>
<dbReference type="BioGRID-ORCS" id="436440">
    <property type="hits" value="9 hits in 76 CRISPR screens"/>
</dbReference>
<dbReference type="PRO" id="PR:F8VQN3"/>
<dbReference type="Proteomes" id="UP000000589">
    <property type="component" value="Chromosome 17"/>
</dbReference>
<dbReference type="RNAct" id="F8VQN3">
    <property type="molecule type" value="protein"/>
</dbReference>
<dbReference type="Bgee" id="ENSMUSG00000071311">
    <property type="expression patterns" value="Expressed in mesodermal cell in embryo and 8 other cell types or tissues"/>
</dbReference>
<dbReference type="GO" id="GO:0005886">
    <property type="term" value="C:plasma membrane"/>
    <property type="evidence" value="ECO:0000250"/>
    <property type="project" value="UniProtKB"/>
</dbReference>
<dbReference type="GO" id="GO:0050544">
    <property type="term" value="F:arachidonate binding"/>
    <property type="evidence" value="ECO:0007669"/>
    <property type="project" value="Ensembl"/>
</dbReference>
<dbReference type="GO" id="GO:0045125">
    <property type="term" value="F:bioactive lipid receptor activity"/>
    <property type="evidence" value="ECO:0000315"/>
    <property type="project" value="UniProtKB"/>
</dbReference>
<dbReference type="GO" id="GO:0004930">
    <property type="term" value="F:G protein-coupled receptor activity"/>
    <property type="evidence" value="ECO:0000250"/>
    <property type="project" value="UniProtKB"/>
</dbReference>
<dbReference type="GO" id="GO:0007186">
    <property type="term" value="P:G protein-coupled receptor signaling pathway"/>
    <property type="evidence" value="ECO:0000250"/>
    <property type="project" value="UniProtKB"/>
</dbReference>
<dbReference type="GO" id="GO:0050728">
    <property type="term" value="P:negative regulation of inflammatory response"/>
    <property type="evidence" value="ECO:0000315"/>
    <property type="project" value="UniProtKB"/>
</dbReference>
<dbReference type="GO" id="GO:0050778">
    <property type="term" value="P:positive regulation of immune response"/>
    <property type="evidence" value="ECO:0000315"/>
    <property type="project" value="UniProtKB"/>
</dbReference>
<dbReference type="GO" id="GO:0010447">
    <property type="term" value="P:response to acidic pH"/>
    <property type="evidence" value="ECO:0000250"/>
    <property type="project" value="UniProtKB"/>
</dbReference>
<dbReference type="GO" id="GO:0002931">
    <property type="term" value="P:response to ischemia"/>
    <property type="evidence" value="ECO:0000315"/>
    <property type="project" value="UniProtKB"/>
</dbReference>
<dbReference type="GO" id="GO:0002237">
    <property type="term" value="P:response to molecule of bacterial origin"/>
    <property type="evidence" value="ECO:0000314"/>
    <property type="project" value="UniProtKB"/>
</dbReference>
<dbReference type="Gene3D" id="1.20.1070.10">
    <property type="entry name" value="Rhodopsin 7-helix transmembrane proteins"/>
    <property type="match status" value="1"/>
</dbReference>
<dbReference type="InterPro" id="IPR000276">
    <property type="entry name" value="GPCR_Rhodpsn"/>
</dbReference>
<dbReference type="InterPro" id="IPR017452">
    <property type="entry name" value="GPCR_Rhodpsn_7TM"/>
</dbReference>
<dbReference type="InterPro" id="IPR051893">
    <property type="entry name" value="HCARs"/>
</dbReference>
<dbReference type="PANTHER" id="PTHR46048:SF7">
    <property type="entry name" value="12-(S)-HYDROXY-5,8,10,14-EICOSATETRAENOIC ACID RECEPTOR"/>
    <property type="match status" value="1"/>
</dbReference>
<dbReference type="PANTHER" id="PTHR46048">
    <property type="entry name" value="HYDROXYCARBOXYLIC ACID RECEPTOR 2"/>
    <property type="match status" value="1"/>
</dbReference>
<dbReference type="Pfam" id="PF00001">
    <property type="entry name" value="7tm_1"/>
    <property type="match status" value="1"/>
</dbReference>
<dbReference type="PRINTS" id="PR00237">
    <property type="entry name" value="GPCRRHODOPSN"/>
</dbReference>
<dbReference type="SUPFAM" id="SSF81321">
    <property type="entry name" value="Family A G protein-coupled receptor-like"/>
    <property type="match status" value="1"/>
</dbReference>
<dbReference type="PROSITE" id="PS00237">
    <property type="entry name" value="G_PROTEIN_RECEP_F1_1"/>
    <property type="match status" value="1"/>
</dbReference>
<dbReference type="PROSITE" id="PS50262">
    <property type="entry name" value="G_PROTEIN_RECEP_F1_2"/>
    <property type="match status" value="1"/>
</dbReference>
<proteinExistence type="inferred from homology"/>
<reference key="1">
    <citation type="journal article" date="1999" name="Mamm. Genome">
        <title>ORFless, intronless, and mutant transcription units in the mouse t complex responder (Tcr) locus.</title>
        <authorList>
            <person name="Schimenti J.C."/>
        </authorList>
    </citation>
    <scope>NUCLEOTIDE SEQUENCE [GENOMIC DNA]</scope>
</reference>
<reference key="2">
    <citation type="journal article" date="2009" name="PLoS Biol.">
        <title>Lineage-specific biology revealed by a finished genome assembly of the mouse.</title>
        <authorList>
            <person name="Church D.M."/>
            <person name="Goodstadt L."/>
            <person name="Hillier L.W."/>
            <person name="Zody M.C."/>
            <person name="Goldstein S."/>
            <person name="She X."/>
            <person name="Bult C.J."/>
            <person name="Agarwala R."/>
            <person name="Cherry J.L."/>
            <person name="DiCuccio M."/>
            <person name="Hlavina W."/>
            <person name="Kapustin Y."/>
            <person name="Meric P."/>
            <person name="Maglott D."/>
            <person name="Birtle Z."/>
            <person name="Marques A.C."/>
            <person name="Graves T."/>
            <person name="Zhou S."/>
            <person name="Teague B."/>
            <person name="Potamousis K."/>
            <person name="Churas C."/>
            <person name="Place M."/>
            <person name="Herschleb J."/>
            <person name="Runnheim R."/>
            <person name="Forrest D."/>
            <person name="Amos-Landgraf J."/>
            <person name="Schwartz D.C."/>
            <person name="Cheng Z."/>
            <person name="Lindblad-Toh K."/>
            <person name="Eichler E.E."/>
            <person name="Ponting C.P."/>
        </authorList>
    </citation>
    <scope>NUCLEOTIDE SEQUENCE [LARGE SCALE GENOMIC DNA]</scope>
    <source>
        <strain>C57BL/6J</strain>
    </source>
</reference>
<reference key="3">
    <citation type="journal article" date="2019" name="Nature">
        <title>GPR31-dependent dendrite protrusion of intestinal CX3CR1+ cells by bacterial metabolites.</title>
        <authorList>
            <person name="Morita N."/>
            <person name="Umemoto E."/>
            <person name="Fujita S."/>
            <person name="Hayashi A."/>
            <person name="Kikuta J."/>
            <person name="Kimura I."/>
            <person name="Haneda T."/>
            <person name="Imai T."/>
            <person name="Inoue A."/>
            <person name="Mimuro H."/>
            <person name="Maeda Y."/>
            <person name="Kayama H."/>
            <person name="Okumura R."/>
            <person name="Aoki J."/>
            <person name="Okada N."/>
            <person name="Kida T."/>
            <person name="Ishii M."/>
            <person name="Nabeshima R."/>
            <person name="Takeda K."/>
        </authorList>
    </citation>
    <scope>DISRUPTION PHENOTYPE</scope>
    <scope>FUNCTION</scope>
</reference>
<reference key="4">
    <citation type="journal article" date="2018" name="Nat. Med.">
        <title>An ALOX12-12-HETE-GPR31 signaling axis is a key mediator of hepatic ischemia-reperfusion injury.</title>
        <authorList>
            <person name="Zhang X.J."/>
            <person name="Cheng X."/>
            <person name="Yan Z.Z."/>
            <person name="Fang J."/>
            <person name="Wang X."/>
            <person name="Wang W."/>
            <person name="Liu Z.Y."/>
            <person name="Shen L.J."/>
            <person name="Zhang P."/>
            <person name="Wang P.X."/>
            <person name="Liao R."/>
            <person name="Ji Y.X."/>
            <person name="Wang J.Y."/>
            <person name="Tian S."/>
            <person name="Zhu X.Y."/>
            <person name="Zhang Y."/>
            <person name="Tian R.F."/>
            <person name="Wang L."/>
            <person name="Ma X.L."/>
            <person name="Huang Z."/>
            <person name="She Z.G."/>
            <person name="Li H."/>
        </authorList>
    </citation>
    <scope>DISRUPTION PHENOTYPE</scope>
    <scope>FUNCTION</scope>
</reference>
<name>GPR31_MOUSE</name>
<gene>
    <name type="primary">Gpr31</name>
    <name type="synonym">Gpr31b</name>
    <name type="synonym">Gpr31c</name>
</gene>
<sequence>MERTNCSAASTVVETAVGTMLTLECVLGLMGNAVALWTFFYRLKVWKPYAVYLFNLVVADLLLATSLPFFAAFYLKGKTWKLGHMPCQVLLFLLAFSRGVGVAFLTTVALDRYLRVVHPRLRVNLLSLRAAWGISSLIWLLMVVLTPQNLLTCRTTQNSTECPSFYPTGGAKAIATCQEVLFFLQVLLPFGLISFCNSGLIRTLQKRLRESDKQPRIRRARVLVAIVLLLFGLCFLPSVLTRVLVHIFQEFKSCSVQQAIVRASDIAGSLTCLHSTLSPAIYCFSNPAFTHSYRKVLKSLRGRRKAAESPSDNLRDSYS</sequence>
<evidence type="ECO:0000250" key="1">
    <source>
        <dbReference type="UniProtKB" id="O00270"/>
    </source>
</evidence>
<evidence type="ECO:0000255" key="2"/>
<evidence type="ECO:0000255" key="3">
    <source>
        <dbReference type="PROSITE-ProRule" id="PRU00521"/>
    </source>
</evidence>
<evidence type="ECO:0000269" key="4">
    <source>
    </source>
</evidence>
<evidence type="ECO:0000269" key="5">
    <source>
    </source>
</evidence>
<evidence type="ECO:0000305" key="6"/>
<organism>
    <name type="scientific">Mus musculus</name>
    <name type="common">Mouse</name>
    <dbReference type="NCBI Taxonomy" id="10090"/>
    <lineage>
        <taxon>Eukaryota</taxon>
        <taxon>Metazoa</taxon>
        <taxon>Chordata</taxon>
        <taxon>Craniata</taxon>
        <taxon>Vertebrata</taxon>
        <taxon>Euteleostomi</taxon>
        <taxon>Mammalia</taxon>
        <taxon>Eutheria</taxon>
        <taxon>Euarchontoglires</taxon>
        <taxon>Glires</taxon>
        <taxon>Rodentia</taxon>
        <taxon>Myomorpha</taxon>
        <taxon>Muroidea</taxon>
        <taxon>Muridae</taxon>
        <taxon>Murinae</taxon>
        <taxon>Mus</taxon>
        <taxon>Mus</taxon>
    </lineage>
</organism>
<accession>F8VQN3</accession>
<accession>Q9JLS1</accession>
<feature type="chain" id="PRO_0000415340" description="12-(S)-hydroxy-5,8,10,14-eicosatetraenoic acid receptor">
    <location>
        <begin position="1"/>
        <end position="319"/>
    </location>
</feature>
<feature type="topological domain" description="Extracellular" evidence="2">
    <location>
        <begin position="1"/>
        <end position="16"/>
    </location>
</feature>
<feature type="transmembrane region" description="Helical; Name=1" evidence="2">
    <location>
        <begin position="17"/>
        <end position="37"/>
    </location>
</feature>
<feature type="topological domain" description="Cytoplasmic" evidence="2">
    <location>
        <begin position="38"/>
        <end position="52"/>
    </location>
</feature>
<feature type="transmembrane region" description="Helical; Name=2" evidence="2">
    <location>
        <begin position="53"/>
        <end position="73"/>
    </location>
</feature>
<feature type="topological domain" description="Extracellular" evidence="2">
    <location>
        <begin position="74"/>
        <end position="91"/>
    </location>
</feature>
<feature type="transmembrane region" description="Helical; Name=3" evidence="2">
    <location>
        <begin position="92"/>
        <end position="110"/>
    </location>
</feature>
<feature type="topological domain" description="Cytoplasmic" evidence="2">
    <location>
        <begin position="111"/>
        <end position="131"/>
    </location>
</feature>
<feature type="transmembrane region" description="Helical; Name=4" evidence="2">
    <location>
        <begin position="132"/>
        <end position="152"/>
    </location>
</feature>
<feature type="topological domain" description="Extracellular" evidence="2">
    <location>
        <begin position="153"/>
        <end position="180"/>
    </location>
</feature>
<feature type="transmembrane region" description="Helical; Name=5" evidence="2">
    <location>
        <begin position="181"/>
        <end position="201"/>
    </location>
</feature>
<feature type="topological domain" description="Cytoplasmic" evidence="2">
    <location>
        <begin position="202"/>
        <end position="219"/>
    </location>
</feature>
<feature type="transmembrane region" description="Helical; Name=6" evidence="2">
    <location>
        <begin position="220"/>
        <end position="240"/>
    </location>
</feature>
<feature type="topological domain" description="Extracellular" evidence="2">
    <location>
        <begin position="241"/>
        <end position="265"/>
    </location>
</feature>
<feature type="transmembrane region" description="Helical; Name=7" evidence="2">
    <location>
        <begin position="266"/>
        <end position="284"/>
    </location>
</feature>
<feature type="topological domain" description="Cytoplasmic" evidence="2">
    <location>
        <begin position="285"/>
        <end position="319"/>
    </location>
</feature>
<feature type="glycosylation site" description="N-linked (GlcNAc...) asparagine" evidence="2">
    <location>
        <position position="5"/>
    </location>
</feature>
<feature type="sequence conflict" description="In Ref. 1; AAF26668." evidence="6" ref="1">
    <original>R</original>
    <variation>H</variation>
    <location>
        <position position="3"/>
    </location>
</feature>
<feature type="sequence conflict" description="In Ref. 1; AAF26668." evidence="6" ref="1">
    <original>L</original>
    <variation>V</variation>
    <location>
        <position position="67"/>
    </location>
</feature>
<feature type="sequence conflict" description="In Ref. 1; AAF26668." evidence="6" ref="1">
    <original>V</original>
    <variation>L</variation>
    <location>
        <position position="89"/>
    </location>
</feature>
<feature type="sequence conflict" description="In Ref. 1; AAF26668." evidence="6" ref="1">
    <original>R</original>
    <variation>C</variation>
    <location>
        <position position="98"/>
    </location>
</feature>
<feature type="sequence conflict" description="In Ref. 1; AAF26668." evidence="6" ref="1">
    <original>T</original>
    <variation>M</variation>
    <location>
        <position position="106"/>
    </location>
</feature>
<feature type="sequence conflict" description="In Ref. 1; AAF26668." evidence="6" ref="1">
    <original>R</original>
    <variation>H</variation>
    <location>
        <position position="115"/>
    </location>
</feature>
<feature type="sequence conflict" description="In Ref. 1; AAF26668." evidence="6" ref="1">
    <original>A</original>
    <variation>T</variation>
    <location>
        <position position="171"/>
    </location>
</feature>
<feature type="sequence conflict" description="In Ref. 1; AAF26668." evidence="6" ref="1">
    <original>R</original>
    <variation>S</variation>
    <location>
        <position position="209"/>
    </location>
</feature>
<feature type="sequence conflict" description="In Ref. 1; AAF26668." evidence="6" ref="1">
    <original>R</original>
    <variation>T</variation>
    <location>
        <position position="216"/>
    </location>
</feature>
<feature type="sequence conflict" description="In Ref. 1; AAF26668." evidence="6" ref="1">
    <original>V</original>
    <variation>M</variation>
    <location>
        <position position="227"/>
    </location>
</feature>
<feature type="sequence conflict" description="In Ref. 1; AAF26668." evidence="6" ref="1">
    <original>V</original>
    <variation>M</variation>
    <location>
        <position position="261"/>
    </location>
</feature>
<comment type="function">
    <text evidence="1 4 5">High-affinity receptor for 12-(S)-hydroxy-5,8,10,14-eicosatetraenoic acid (12-S-HETE), with much lower affinities for other HETE isomers (By similarity) (PubMed:29227475). 12-S-HETE is a eicosanoid, a 12-lipoxygenase (ALOX12) metabolite of arachidonic acid, involved in many physiologic and pathologic processes, such as cell growth, adhesion, inflammation and cancer promotion. 12-S-HETE-binding leads to activation of ERK1/2 (MAPK3/MAPK1), MEK, and NF-kappa-B pathways and leads to cell growth. Plays a crucial role for proliferation, survival and macropinocytosis of KRAS-dependent cancer cells by mediating the translocation of KRAS from the endoplasmic reticulum to the plasma membrane (PM) and its association with the PM (By similarity). Contributes to enhanced immune responses by inducing dendrite protrusion of small intestinal CX3CR1(+) phagocytes for the uptake of luminal antigens (PubMed:30675063). Also acts as a key receptor for 12-(S)-HETE-mediated liver ischemia reperfusion injury (PubMed:29227475).</text>
</comment>
<comment type="function">
    <text evidence="1">Proton-sensing G protein-coupled receptor.</text>
</comment>
<comment type="subunit">
    <text evidence="1">Interacts with KRAS; in a farnesylation-dependent manner.</text>
</comment>
<comment type="subcellular location">
    <subcellularLocation>
        <location evidence="1">Cell membrane</location>
        <topology evidence="2">Multi-pass membrane protein</topology>
    </subcellularLocation>
</comment>
<comment type="disruption phenotype">
    <text evidence="4 5">Deficient mice exhibit a reduced response to enteric bacteria, showing defective dendrite protrusions of CX3CR1(+) cells in the small intestine (PubMed:30675063). Under ischemia/reperfusion injury, liver dysfunction, cell death and inflammatory induction are consistently and significantly inhibited at 6 hours after reperfusion in GPR31-deficient mice (PubMed:29227475).</text>
</comment>
<comment type="similarity">
    <text evidence="3">Belongs to the G-protein coupled receptor 1 family.</text>
</comment>
<protein>
    <recommendedName>
        <fullName>12-(S)-hydroxy-5,8,10,14-eicosatetraenoic acid receptor</fullName>
        <shortName>12-(S)-HETE receptor</shortName>
        <shortName>12-HETER</shortName>
    </recommendedName>
    <alternativeName>
        <fullName>G-protein coupled receptor 31</fullName>
    </alternativeName>
</protein>